<organism>
    <name type="scientific">Ehrlichia canis (strain Jake)</name>
    <dbReference type="NCBI Taxonomy" id="269484"/>
    <lineage>
        <taxon>Bacteria</taxon>
        <taxon>Pseudomonadati</taxon>
        <taxon>Pseudomonadota</taxon>
        <taxon>Alphaproteobacteria</taxon>
        <taxon>Rickettsiales</taxon>
        <taxon>Anaplasmataceae</taxon>
        <taxon>Ehrlichia</taxon>
    </lineage>
</organism>
<dbReference type="EC" id="2.8.1.13" evidence="1"/>
<dbReference type="EMBL" id="CP000107">
    <property type="protein sequence ID" value="AAZ68275.1"/>
    <property type="molecule type" value="Genomic_DNA"/>
</dbReference>
<dbReference type="RefSeq" id="WP_011304353.1">
    <property type="nucleotide sequence ID" value="NC_007354.1"/>
</dbReference>
<dbReference type="SMR" id="Q3YSN0"/>
<dbReference type="FunCoup" id="Q3YSN0">
    <property type="interactions" value="330"/>
</dbReference>
<dbReference type="STRING" id="269484.Ecaj_0226"/>
<dbReference type="KEGG" id="ecn:Ecaj_0226"/>
<dbReference type="eggNOG" id="COG0482">
    <property type="taxonomic scope" value="Bacteria"/>
</dbReference>
<dbReference type="HOGENOM" id="CLU_035188_0_0_5"/>
<dbReference type="InParanoid" id="Q3YSN0"/>
<dbReference type="Proteomes" id="UP000000435">
    <property type="component" value="Chromosome"/>
</dbReference>
<dbReference type="GO" id="GO:0005737">
    <property type="term" value="C:cytoplasm"/>
    <property type="evidence" value="ECO:0007669"/>
    <property type="project" value="UniProtKB-SubCell"/>
</dbReference>
<dbReference type="GO" id="GO:0005524">
    <property type="term" value="F:ATP binding"/>
    <property type="evidence" value="ECO:0007669"/>
    <property type="project" value="UniProtKB-KW"/>
</dbReference>
<dbReference type="GO" id="GO:0000049">
    <property type="term" value="F:tRNA binding"/>
    <property type="evidence" value="ECO:0007669"/>
    <property type="project" value="UniProtKB-KW"/>
</dbReference>
<dbReference type="GO" id="GO:0103016">
    <property type="term" value="F:tRNA-uridine 2-sulfurtransferase activity"/>
    <property type="evidence" value="ECO:0007669"/>
    <property type="project" value="UniProtKB-EC"/>
</dbReference>
<dbReference type="GO" id="GO:0002143">
    <property type="term" value="P:tRNA wobble position uridine thiolation"/>
    <property type="evidence" value="ECO:0007669"/>
    <property type="project" value="TreeGrafter"/>
</dbReference>
<dbReference type="CDD" id="cd01998">
    <property type="entry name" value="MnmA_TRMU-like"/>
    <property type="match status" value="1"/>
</dbReference>
<dbReference type="FunFam" id="2.30.30.280:FF:000001">
    <property type="entry name" value="tRNA-specific 2-thiouridylase MnmA"/>
    <property type="match status" value="1"/>
</dbReference>
<dbReference type="FunFam" id="3.40.50.620:FF:000115">
    <property type="entry name" value="tRNA-specific 2-thiouridylase MnmA"/>
    <property type="match status" value="1"/>
</dbReference>
<dbReference type="Gene3D" id="2.30.30.280">
    <property type="entry name" value="Adenine nucleotide alpha hydrolases-like domains"/>
    <property type="match status" value="1"/>
</dbReference>
<dbReference type="Gene3D" id="3.40.50.620">
    <property type="entry name" value="HUPs"/>
    <property type="match status" value="1"/>
</dbReference>
<dbReference type="Gene3D" id="2.40.30.10">
    <property type="entry name" value="Translation factors"/>
    <property type="match status" value="1"/>
</dbReference>
<dbReference type="HAMAP" id="MF_00144">
    <property type="entry name" value="tRNA_thiouridyl_MnmA"/>
    <property type="match status" value="1"/>
</dbReference>
<dbReference type="InterPro" id="IPR004506">
    <property type="entry name" value="MnmA-like"/>
</dbReference>
<dbReference type="InterPro" id="IPR046885">
    <property type="entry name" value="MnmA-like_C"/>
</dbReference>
<dbReference type="InterPro" id="IPR046884">
    <property type="entry name" value="MnmA-like_central"/>
</dbReference>
<dbReference type="InterPro" id="IPR023382">
    <property type="entry name" value="MnmA-like_central_sf"/>
</dbReference>
<dbReference type="InterPro" id="IPR014729">
    <property type="entry name" value="Rossmann-like_a/b/a_fold"/>
</dbReference>
<dbReference type="NCBIfam" id="NF001138">
    <property type="entry name" value="PRK00143.1"/>
    <property type="match status" value="1"/>
</dbReference>
<dbReference type="NCBIfam" id="TIGR00420">
    <property type="entry name" value="trmU"/>
    <property type="match status" value="1"/>
</dbReference>
<dbReference type="PANTHER" id="PTHR11933:SF5">
    <property type="entry name" value="MITOCHONDRIAL TRNA-SPECIFIC 2-THIOURIDYLASE 1"/>
    <property type="match status" value="1"/>
</dbReference>
<dbReference type="PANTHER" id="PTHR11933">
    <property type="entry name" value="TRNA 5-METHYLAMINOMETHYL-2-THIOURIDYLATE -METHYLTRANSFERASE"/>
    <property type="match status" value="1"/>
</dbReference>
<dbReference type="Pfam" id="PF03054">
    <property type="entry name" value="tRNA_Me_trans"/>
    <property type="match status" value="1"/>
</dbReference>
<dbReference type="Pfam" id="PF20258">
    <property type="entry name" value="tRNA_Me_trans_C"/>
    <property type="match status" value="1"/>
</dbReference>
<dbReference type="Pfam" id="PF20259">
    <property type="entry name" value="tRNA_Me_trans_M"/>
    <property type="match status" value="1"/>
</dbReference>
<dbReference type="SUPFAM" id="SSF52402">
    <property type="entry name" value="Adenine nucleotide alpha hydrolases-like"/>
    <property type="match status" value="1"/>
</dbReference>
<feature type="chain" id="PRO_0000349620" description="tRNA-specific 2-thiouridylase MnmA">
    <location>
        <begin position="1"/>
        <end position="367"/>
    </location>
</feature>
<feature type="region of interest" description="Interaction with tRNA" evidence="1">
    <location>
        <begin position="161"/>
        <end position="163"/>
    </location>
</feature>
<feature type="active site" description="Nucleophile" evidence="1">
    <location>
        <position position="115"/>
    </location>
</feature>
<feature type="active site" description="Cysteine persulfide intermediate" evidence="1">
    <location>
        <position position="211"/>
    </location>
</feature>
<feature type="binding site" evidence="1">
    <location>
        <begin position="24"/>
        <end position="31"/>
    </location>
    <ligand>
        <name>ATP</name>
        <dbReference type="ChEBI" id="CHEBI:30616"/>
    </ligand>
</feature>
<feature type="binding site" evidence="1">
    <location>
        <position position="50"/>
    </location>
    <ligand>
        <name>ATP</name>
        <dbReference type="ChEBI" id="CHEBI:30616"/>
    </ligand>
</feature>
<feature type="binding site" evidence="1">
    <location>
        <position position="139"/>
    </location>
    <ligand>
        <name>ATP</name>
        <dbReference type="ChEBI" id="CHEBI:30616"/>
    </ligand>
</feature>
<feature type="site" description="Interaction with tRNA" evidence="1">
    <location>
        <position position="140"/>
    </location>
</feature>
<feature type="site" description="Interaction with tRNA" evidence="1">
    <location>
        <position position="350"/>
    </location>
</feature>
<feature type="disulfide bond" description="Alternate" evidence="1">
    <location>
        <begin position="115"/>
        <end position="211"/>
    </location>
</feature>
<name>MNMA_EHRCJ</name>
<reference key="1">
    <citation type="journal article" date="2006" name="J. Bacteriol.">
        <title>The genome of the obligately intracellular bacterium Ehrlichia canis reveals themes of complex membrane structure and immune evasion strategies.</title>
        <authorList>
            <person name="Mavromatis K."/>
            <person name="Doyle C.K."/>
            <person name="Lykidis A."/>
            <person name="Ivanova N."/>
            <person name="Francino M.P."/>
            <person name="Chain P."/>
            <person name="Shin M."/>
            <person name="Malfatti S."/>
            <person name="Larimer F."/>
            <person name="Copeland A."/>
            <person name="Detter J.C."/>
            <person name="Land M."/>
            <person name="Richardson P.M."/>
            <person name="Yu X.J."/>
            <person name="Walker D.H."/>
            <person name="McBride J.W."/>
            <person name="Kyrpides N.C."/>
        </authorList>
    </citation>
    <scope>NUCLEOTIDE SEQUENCE [LARGE SCALE GENOMIC DNA]</scope>
    <source>
        <strain>Jake</strain>
    </source>
</reference>
<proteinExistence type="inferred from homology"/>
<comment type="function">
    <text evidence="1">Catalyzes the 2-thiolation of uridine at the wobble position (U34) of tRNA, leading to the formation of s(2)U34.</text>
</comment>
<comment type="catalytic activity">
    <reaction evidence="1">
        <text>S-sulfanyl-L-cysteinyl-[protein] + uridine(34) in tRNA + AH2 + ATP = 2-thiouridine(34) in tRNA + L-cysteinyl-[protein] + A + AMP + diphosphate + H(+)</text>
        <dbReference type="Rhea" id="RHEA:47032"/>
        <dbReference type="Rhea" id="RHEA-COMP:10131"/>
        <dbReference type="Rhea" id="RHEA-COMP:11726"/>
        <dbReference type="Rhea" id="RHEA-COMP:11727"/>
        <dbReference type="Rhea" id="RHEA-COMP:11728"/>
        <dbReference type="ChEBI" id="CHEBI:13193"/>
        <dbReference type="ChEBI" id="CHEBI:15378"/>
        <dbReference type="ChEBI" id="CHEBI:17499"/>
        <dbReference type="ChEBI" id="CHEBI:29950"/>
        <dbReference type="ChEBI" id="CHEBI:30616"/>
        <dbReference type="ChEBI" id="CHEBI:33019"/>
        <dbReference type="ChEBI" id="CHEBI:61963"/>
        <dbReference type="ChEBI" id="CHEBI:65315"/>
        <dbReference type="ChEBI" id="CHEBI:87170"/>
        <dbReference type="ChEBI" id="CHEBI:456215"/>
        <dbReference type="EC" id="2.8.1.13"/>
    </reaction>
</comment>
<comment type="subcellular location">
    <subcellularLocation>
        <location evidence="1">Cytoplasm</location>
    </subcellularLocation>
</comment>
<comment type="similarity">
    <text evidence="1">Belongs to the MnmA/TRMU family.</text>
</comment>
<accession>Q3YSN0</accession>
<sequence length="367" mass="40607">MLDDFKIDPLVKNKSPSSTTVVVAMSGGVDSSVAAALLHKLGYKVIGITLQLYNNTSGKGGCCGSTDTQDAKQVASSMGFPHYTLNYEKAFREEVIENFIDTYTQGKTPIPCVKCNQVIKFRDLLNTTKSLGADVLVTGHYIRKVEQDDEIYVYSSKDTKKDQSYFLFATTIEQLKFLRFPLGNFHKDNIRKLAKYFNLSVAAKPDSQNICFVTDTYKNTIAHLRPQTVKKGHIIDTNGNILGEHNGIVNFTIGQRRGIGLASKEPLYVTKLNPDTNEVTVGPKSALLQNKLHIEDINWLLKDKIPYSGLSVKVKLRSSHSGSTAIIYPNDMNKATVILQDTYCTVTPGQACVVYDGDRMLGGGWIC</sequence>
<keyword id="KW-0067">ATP-binding</keyword>
<keyword id="KW-0963">Cytoplasm</keyword>
<keyword id="KW-1015">Disulfide bond</keyword>
<keyword id="KW-0547">Nucleotide-binding</keyword>
<keyword id="KW-0694">RNA-binding</keyword>
<keyword id="KW-0808">Transferase</keyword>
<keyword id="KW-0819">tRNA processing</keyword>
<keyword id="KW-0820">tRNA-binding</keyword>
<protein>
    <recommendedName>
        <fullName evidence="1">tRNA-specific 2-thiouridylase MnmA</fullName>
        <ecNumber evidence="1">2.8.1.13</ecNumber>
    </recommendedName>
</protein>
<gene>
    <name evidence="1" type="primary">mnmA</name>
    <name type="ordered locus">Ecaj_0226</name>
</gene>
<evidence type="ECO:0000255" key="1">
    <source>
        <dbReference type="HAMAP-Rule" id="MF_00144"/>
    </source>
</evidence>